<reference key="1">
    <citation type="journal article" date="2008" name="Genome Res.">
        <title>Insights from the complete genome sequence of Mycobacterium marinum on the evolution of Mycobacterium tuberculosis.</title>
        <authorList>
            <person name="Stinear T.P."/>
            <person name="Seemann T."/>
            <person name="Harrison P.F."/>
            <person name="Jenkin G.A."/>
            <person name="Davies J.K."/>
            <person name="Johnson P.D."/>
            <person name="Abdellah Z."/>
            <person name="Arrowsmith C."/>
            <person name="Chillingworth T."/>
            <person name="Churcher C."/>
            <person name="Clarke K."/>
            <person name="Cronin A."/>
            <person name="Davis P."/>
            <person name="Goodhead I."/>
            <person name="Holroyd N."/>
            <person name="Jagels K."/>
            <person name="Lord A."/>
            <person name="Moule S."/>
            <person name="Mungall K."/>
            <person name="Norbertczak H."/>
            <person name="Quail M.A."/>
            <person name="Rabbinowitsch E."/>
            <person name="Walker D."/>
            <person name="White B."/>
            <person name="Whitehead S."/>
            <person name="Small P.L."/>
            <person name="Brosch R."/>
            <person name="Ramakrishnan L."/>
            <person name="Fischbach M.A."/>
            <person name="Parkhill J."/>
            <person name="Cole S.T."/>
        </authorList>
    </citation>
    <scope>NUCLEOTIDE SEQUENCE [LARGE SCALE GENOMIC DNA]</scope>
    <source>
        <strain>ATCC BAA-535 / M</strain>
    </source>
</reference>
<reference key="2">
    <citation type="journal article" date="2015" name="J. Bacteriol.">
        <title>Biosynthesis of cell envelope-associated phenolic glycolipids in Mycobacterium marinum.</title>
        <authorList>
            <person name="Vergnolle O."/>
            <person name="Chavadi S.S."/>
            <person name="Edupuganti U.R."/>
            <person name="Mohandas P."/>
            <person name="Chan C."/>
            <person name="Zeng J."/>
            <person name="Kopylov M."/>
            <person name="Angelo N.G."/>
            <person name="Warren J.D."/>
            <person name="Soll C.E."/>
            <person name="Quadri L.E."/>
        </authorList>
    </citation>
    <scope>FUNCTION</scope>
    <scope>CATALYTIC ACTIVITY</scope>
    <scope>PATHWAY</scope>
    <scope>DISRUPTION PHENOTYPE</scope>
    <source>
        <strain>ATCC BAA-535 / M</strain>
    </source>
</reference>
<accession>B2HIN2</accession>
<proteinExistence type="evidence at protein level"/>
<name>FAA26_MYCMM</name>
<evidence type="ECO:0000250" key="1">
    <source>
        <dbReference type="UniProtKB" id="P9WQ43"/>
    </source>
</evidence>
<evidence type="ECO:0000269" key="2">
    <source>
    </source>
</evidence>
<evidence type="ECO:0000303" key="3">
    <source>
    </source>
</evidence>
<evidence type="ECO:0000305" key="4"/>
<sequence>MPVTDRSIPSLLKEQADQRPNETAFTFLDYDLDPNGFAETLTWSQVYARACVVADELTMYGVPGDRVAILAPQGLEYIVAFLGALQAGFIGVPLSTPQYGVHDERVSAVLRDSQPVAILTTSAVVGDVTKYASSQDGQPAPSVIEVDLLDLDTPRPQQALPQPASGSAYLQYTSGSTRTPAGVIVSHENVIANVTQSLYGYFGGPDKFPADTTVVSWLPLFHDMGLILGICAPLVTGCTAVLLSPMSFLRRPARWMQLLASHPKCFSAAPNFAFELAVRRTTDEDLAGLDLGDVLGIVSGSERIHVATIKRFTERFAPFNLSPAAVRPSYGLAEATLYVAAPEPGTTPRTVRFDYESLTAGHARPCRADGSVGTELISYGSPDPSAVRIVNPETMIENPSGTVGEIWAHGEHVAMGYWQKPEQSDRTFNARIVNPAPGTPEGPWLRTGDLGVMSNGELFIMGRIKDLVIVDGRNHYPDDIEATIQEITGGRVAAIAVPDNITEQLVAIIELKRRGASAEEAMVKLRSVKREITSAISKSHSLRVADVVLVPPGSIPITTSGKIRRAACVERYRSDGFNRLDVTV</sequence>
<dbReference type="EC" id="6.2.1.59" evidence="2"/>
<dbReference type="EMBL" id="CP000854">
    <property type="protein sequence ID" value="ACC40226.1"/>
    <property type="molecule type" value="Genomic_DNA"/>
</dbReference>
<dbReference type="RefSeq" id="WP_012393584.1">
    <property type="nucleotide sequence ID" value="NC_010612.1"/>
</dbReference>
<dbReference type="SMR" id="B2HIN2"/>
<dbReference type="STRING" id="216594.MMAR_1777"/>
<dbReference type="KEGG" id="mmi:MMAR_1777"/>
<dbReference type="eggNOG" id="COG0318">
    <property type="taxonomic scope" value="Bacteria"/>
</dbReference>
<dbReference type="HOGENOM" id="CLU_000022_23_7_11"/>
<dbReference type="OrthoDB" id="3671040at2"/>
<dbReference type="BRENDA" id="6.2.1.59">
    <property type="organism ID" value="3506"/>
</dbReference>
<dbReference type="UniPathway" id="UPA00094"/>
<dbReference type="Proteomes" id="UP000001190">
    <property type="component" value="Chromosome"/>
</dbReference>
<dbReference type="GO" id="GO:0005886">
    <property type="term" value="C:plasma membrane"/>
    <property type="evidence" value="ECO:0007669"/>
    <property type="project" value="TreeGrafter"/>
</dbReference>
<dbReference type="GO" id="GO:0070566">
    <property type="term" value="F:adenylyltransferase activity"/>
    <property type="evidence" value="ECO:0007669"/>
    <property type="project" value="TreeGrafter"/>
</dbReference>
<dbReference type="GO" id="GO:0016874">
    <property type="term" value="F:ligase activity"/>
    <property type="evidence" value="ECO:0007669"/>
    <property type="project" value="UniProtKB-KW"/>
</dbReference>
<dbReference type="GO" id="GO:0071766">
    <property type="term" value="P:Actinobacterium-type cell wall biogenesis"/>
    <property type="evidence" value="ECO:0007669"/>
    <property type="project" value="UniProtKB-ARBA"/>
</dbReference>
<dbReference type="GO" id="GO:0006633">
    <property type="term" value="P:fatty acid biosynthetic process"/>
    <property type="evidence" value="ECO:0007669"/>
    <property type="project" value="UniProtKB-UniPathway"/>
</dbReference>
<dbReference type="GO" id="GO:0008610">
    <property type="term" value="P:lipid biosynthetic process"/>
    <property type="evidence" value="ECO:0000250"/>
    <property type="project" value="UniProtKB"/>
</dbReference>
<dbReference type="CDD" id="cd05931">
    <property type="entry name" value="FAAL"/>
    <property type="match status" value="1"/>
</dbReference>
<dbReference type="FunFam" id="3.30.300.30:FF:000016">
    <property type="entry name" value="Fatty-acid-CoA ligase FadD26"/>
    <property type="match status" value="1"/>
</dbReference>
<dbReference type="FunFam" id="3.40.50.12780:FF:000013">
    <property type="entry name" value="Long-chain-fatty-acid--AMP ligase FadD32"/>
    <property type="match status" value="1"/>
</dbReference>
<dbReference type="Gene3D" id="3.30.300.30">
    <property type="match status" value="1"/>
</dbReference>
<dbReference type="Gene3D" id="3.40.50.12780">
    <property type="entry name" value="N-terminal domain of ligase-like"/>
    <property type="match status" value="1"/>
</dbReference>
<dbReference type="InterPro" id="IPR025110">
    <property type="entry name" value="AMP-bd_C"/>
</dbReference>
<dbReference type="InterPro" id="IPR045851">
    <property type="entry name" value="AMP-bd_C_sf"/>
</dbReference>
<dbReference type="InterPro" id="IPR000873">
    <property type="entry name" value="AMP-dep_synth/lig_dom"/>
</dbReference>
<dbReference type="InterPro" id="IPR042099">
    <property type="entry name" value="ANL_N_sf"/>
</dbReference>
<dbReference type="InterPro" id="IPR040097">
    <property type="entry name" value="FAAL/FAAC"/>
</dbReference>
<dbReference type="NCBIfam" id="NF004509">
    <property type="entry name" value="PRK05850.1"/>
    <property type="match status" value="1"/>
</dbReference>
<dbReference type="PANTHER" id="PTHR22754:SF32">
    <property type="entry name" value="DISCO-INTERACTING PROTEIN 2"/>
    <property type="match status" value="1"/>
</dbReference>
<dbReference type="PANTHER" id="PTHR22754">
    <property type="entry name" value="DISCO-INTERACTING PROTEIN 2 DIP2 -RELATED"/>
    <property type="match status" value="1"/>
</dbReference>
<dbReference type="Pfam" id="PF00501">
    <property type="entry name" value="AMP-binding"/>
    <property type="match status" value="1"/>
</dbReference>
<dbReference type="Pfam" id="PF23024">
    <property type="entry name" value="AMP-dom_DIP2-like"/>
    <property type="match status" value="1"/>
</dbReference>
<dbReference type="SUPFAM" id="SSF56801">
    <property type="entry name" value="Acetyl-CoA synthetase-like"/>
    <property type="match status" value="1"/>
</dbReference>
<organism>
    <name type="scientific">Mycobacterium marinum (strain ATCC BAA-535 / M)</name>
    <dbReference type="NCBI Taxonomy" id="216594"/>
    <lineage>
        <taxon>Bacteria</taxon>
        <taxon>Bacillati</taxon>
        <taxon>Actinomycetota</taxon>
        <taxon>Actinomycetes</taxon>
        <taxon>Mycobacteriales</taxon>
        <taxon>Mycobacteriaceae</taxon>
        <taxon>Mycobacterium</taxon>
        <taxon>Mycobacterium ulcerans group</taxon>
    </lineage>
</organism>
<gene>
    <name evidence="3" type="primary">fadD26</name>
    <name type="ordered locus">MMAR_1777</name>
</gene>
<keyword id="KW-0276">Fatty acid metabolism</keyword>
<keyword id="KW-0436">Ligase</keyword>
<keyword id="KW-0443">Lipid metabolism</keyword>
<keyword id="KW-1185">Reference proteome</keyword>
<feature type="chain" id="PRO_0000406354" description="Long-chain-fatty-acid--AMP ligase FadD26">
    <location>
        <begin position="1"/>
        <end position="584"/>
    </location>
</feature>
<comment type="function">
    <text evidence="1 2">Catalyzes the activation of long-chain fatty acids as acyl-adenylates (acyl-AMP), which are then transferred to the multifunctional polyketide synthase PpsA for further chain extension (PubMed:25561717). Catalyzes the adenylation of the long-chain fatty acids eicosanoate (C20) or docosanoate (C22), and potentially the very-long-chain fatty acid lignocerate (C24) (By similarity). Involved in the biosynthesis of phthiocerol dimycocerosate (DIM A) and phthiodiolone dimycocerosate (DIM B) (By similarity) (PubMed:25561717).</text>
</comment>
<comment type="catalytic activity">
    <reaction evidence="2">
        <text>holo-[(phenol)carboxyphthiodiolenone synthase] + a long-chain fatty acid + ATP = a long-chain fatty acyl-[(phenol)carboxyphthiodiolenone synthase] + AMP + diphosphate</text>
        <dbReference type="Rhea" id="RHEA:64660"/>
        <dbReference type="Rhea" id="RHEA-COMP:14271"/>
        <dbReference type="Rhea" id="RHEA-COMP:16648"/>
        <dbReference type="ChEBI" id="CHEBI:30616"/>
        <dbReference type="ChEBI" id="CHEBI:33019"/>
        <dbReference type="ChEBI" id="CHEBI:57560"/>
        <dbReference type="ChEBI" id="CHEBI:64479"/>
        <dbReference type="ChEBI" id="CHEBI:133243"/>
        <dbReference type="ChEBI" id="CHEBI:456215"/>
        <dbReference type="EC" id="6.2.1.59"/>
    </reaction>
</comment>
<comment type="catalytic activity">
    <reaction evidence="1">
        <text>eicosanoate + holo-[(phenol)carboxyphthiodiolenone synthase] + ATP = icosanoyl-[(phenol)carboxyphthiodiolenone synthase] + AMP + diphosphate</text>
        <dbReference type="Rhea" id="RHEA:59156"/>
        <dbReference type="Rhea" id="RHEA-COMP:14271"/>
        <dbReference type="Rhea" id="RHEA-COMP:14985"/>
        <dbReference type="ChEBI" id="CHEBI:30616"/>
        <dbReference type="ChEBI" id="CHEBI:32360"/>
        <dbReference type="ChEBI" id="CHEBI:33019"/>
        <dbReference type="ChEBI" id="CHEBI:64479"/>
        <dbReference type="ChEBI" id="CHEBI:87848"/>
        <dbReference type="ChEBI" id="CHEBI:456215"/>
        <dbReference type="EC" id="6.2.1.59"/>
    </reaction>
</comment>
<comment type="catalytic activity">
    <reaction evidence="1">
        <text>holo-[(phenol)carboxyphthiodiolenone synthase] + docosanoate + ATP = docosanoyl-[(phenol)carboxyphthiodiolenone synthase] + AMP + diphosphate</text>
        <dbReference type="Rhea" id="RHEA:59160"/>
        <dbReference type="Rhea" id="RHEA-COMP:14271"/>
        <dbReference type="Rhea" id="RHEA-COMP:14987"/>
        <dbReference type="ChEBI" id="CHEBI:23858"/>
        <dbReference type="ChEBI" id="CHEBI:30616"/>
        <dbReference type="ChEBI" id="CHEBI:33019"/>
        <dbReference type="ChEBI" id="CHEBI:64479"/>
        <dbReference type="ChEBI" id="CHEBI:142238"/>
        <dbReference type="ChEBI" id="CHEBI:456215"/>
        <dbReference type="EC" id="6.2.1.59"/>
    </reaction>
</comment>
<comment type="pathway">
    <text evidence="2">Lipid metabolism; fatty acid biosynthesis.</text>
</comment>
<comment type="disruption phenotype">
    <text evidence="2">Deletion of the gene produces selective loss of phthiocerol dimycocerosates (PDIMs).</text>
</comment>
<comment type="similarity">
    <text evidence="4">Belongs to the ATP-dependent AMP-binding enzyme family.</text>
</comment>
<protein>
    <recommendedName>
        <fullName>Long-chain-fatty-acid--AMP ligase FadD26</fullName>
        <shortName>FAAL</shortName>
        <ecNumber evidence="2">6.2.1.59</ecNumber>
    </recommendedName>
    <alternativeName>
        <fullName>Acyl-AMP synthetase</fullName>
    </alternativeName>
</protein>